<gene>
    <name type="primary">nagB</name>
    <name type="ordered locus">BT_4127</name>
</gene>
<proteinExistence type="inferred from homology"/>
<reference key="1">
    <citation type="journal article" date="2003" name="Science">
        <title>A genomic view of the human-Bacteroides thetaiotaomicron symbiosis.</title>
        <authorList>
            <person name="Xu J."/>
            <person name="Bjursell M.K."/>
            <person name="Himrod J."/>
            <person name="Deng S."/>
            <person name="Carmichael L.K."/>
            <person name="Chiang H.C."/>
            <person name="Hooper L.V."/>
            <person name="Gordon J.I."/>
        </authorList>
    </citation>
    <scope>NUCLEOTIDE SEQUENCE [LARGE SCALE GENOMIC DNA]</scope>
    <source>
        <strain>ATCC 29148 / DSM 2079 / JCM 5827 / CCUG 10774 / NCTC 10582 / VPI-5482 / E50</strain>
    </source>
</reference>
<organism>
    <name type="scientific">Bacteroides thetaiotaomicron (strain ATCC 29148 / DSM 2079 / JCM 5827 / CCUG 10774 / NCTC 10582 / VPI-5482 / E50)</name>
    <dbReference type="NCBI Taxonomy" id="226186"/>
    <lineage>
        <taxon>Bacteria</taxon>
        <taxon>Pseudomonadati</taxon>
        <taxon>Bacteroidota</taxon>
        <taxon>Bacteroidia</taxon>
        <taxon>Bacteroidales</taxon>
        <taxon>Bacteroidaceae</taxon>
        <taxon>Bacteroides</taxon>
    </lineage>
</organism>
<keyword id="KW-0021">Allosteric enzyme</keyword>
<keyword id="KW-0119">Carbohydrate metabolism</keyword>
<keyword id="KW-0378">Hydrolase</keyword>
<keyword id="KW-1185">Reference proteome</keyword>
<evidence type="ECO:0000250" key="1"/>
<evidence type="ECO:0000305" key="2"/>
<comment type="function">
    <text evidence="1">Catalyzes the reversible isomerization-deamination of glucosamine 6-phosphate (GlcN6P) to form fructose 6-phosphate (Fru6P) and ammonium ion.</text>
</comment>
<comment type="catalytic activity">
    <reaction>
        <text>alpha-D-glucosamine 6-phosphate + H2O = beta-D-fructose 6-phosphate + NH4(+)</text>
        <dbReference type="Rhea" id="RHEA:12172"/>
        <dbReference type="ChEBI" id="CHEBI:15377"/>
        <dbReference type="ChEBI" id="CHEBI:28938"/>
        <dbReference type="ChEBI" id="CHEBI:57634"/>
        <dbReference type="ChEBI" id="CHEBI:75989"/>
        <dbReference type="EC" id="3.5.99.6"/>
    </reaction>
</comment>
<comment type="activity regulation">
    <text evidence="1">Allosterically activated by N-acetylglucosamine 6-phosphate (GlcNAc6P).</text>
</comment>
<comment type="pathway">
    <text>Amino-sugar metabolism; N-acetylneuraminate degradation; D-fructose 6-phosphate from N-acetylneuraminate: step 5/5.</text>
</comment>
<comment type="similarity">
    <text evidence="2">Belongs to the glucosamine/galactosamine-6-phosphate isomerase family. NagB subfamily.</text>
</comment>
<dbReference type="EC" id="3.5.99.6"/>
<dbReference type="EMBL" id="AE015928">
    <property type="protein sequence ID" value="AAO79232.1"/>
    <property type="molecule type" value="Genomic_DNA"/>
</dbReference>
<dbReference type="RefSeq" id="NP_813038.1">
    <property type="nucleotide sequence ID" value="NC_004663.1"/>
</dbReference>
<dbReference type="RefSeq" id="WP_008761009.1">
    <property type="nucleotide sequence ID" value="NZ_UYXG01000005.1"/>
</dbReference>
<dbReference type="SMR" id="Q8A094"/>
<dbReference type="FunCoup" id="Q8A094">
    <property type="interactions" value="373"/>
</dbReference>
<dbReference type="STRING" id="226186.BT_4127"/>
<dbReference type="PaxDb" id="226186-BT_4127"/>
<dbReference type="EnsemblBacteria" id="AAO79232">
    <property type="protein sequence ID" value="AAO79232"/>
    <property type="gene ID" value="BT_4127"/>
</dbReference>
<dbReference type="GeneID" id="60925302"/>
<dbReference type="KEGG" id="bth:BT_4127"/>
<dbReference type="PATRIC" id="fig|226186.12.peg.4194"/>
<dbReference type="eggNOG" id="COG0363">
    <property type="taxonomic scope" value="Bacteria"/>
</dbReference>
<dbReference type="HOGENOM" id="CLU_049611_0_1_10"/>
<dbReference type="InParanoid" id="Q8A094"/>
<dbReference type="OrthoDB" id="9791139at2"/>
<dbReference type="UniPathway" id="UPA00629">
    <property type="reaction ID" value="UER00684"/>
</dbReference>
<dbReference type="Proteomes" id="UP000001414">
    <property type="component" value="Chromosome"/>
</dbReference>
<dbReference type="GO" id="GO:0005737">
    <property type="term" value="C:cytoplasm"/>
    <property type="evidence" value="ECO:0000318"/>
    <property type="project" value="GO_Central"/>
</dbReference>
<dbReference type="GO" id="GO:0004342">
    <property type="term" value="F:glucosamine-6-phosphate deaminase activity"/>
    <property type="evidence" value="ECO:0000318"/>
    <property type="project" value="GO_Central"/>
</dbReference>
<dbReference type="GO" id="GO:0042802">
    <property type="term" value="F:identical protein binding"/>
    <property type="evidence" value="ECO:0000318"/>
    <property type="project" value="GO_Central"/>
</dbReference>
<dbReference type="GO" id="GO:0005975">
    <property type="term" value="P:carbohydrate metabolic process"/>
    <property type="evidence" value="ECO:0007669"/>
    <property type="project" value="InterPro"/>
</dbReference>
<dbReference type="GO" id="GO:0006043">
    <property type="term" value="P:glucosamine catabolic process"/>
    <property type="evidence" value="ECO:0000318"/>
    <property type="project" value="GO_Central"/>
</dbReference>
<dbReference type="GO" id="GO:0006046">
    <property type="term" value="P:N-acetylglucosamine catabolic process"/>
    <property type="evidence" value="ECO:0000318"/>
    <property type="project" value="GO_Central"/>
</dbReference>
<dbReference type="GO" id="GO:0019262">
    <property type="term" value="P:N-acetylneuraminate catabolic process"/>
    <property type="evidence" value="ECO:0000318"/>
    <property type="project" value="GO_Central"/>
</dbReference>
<dbReference type="CDD" id="cd01399">
    <property type="entry name" value="GlcN6P_deaminase"/>
    <property type="match status" value="1"/>
</dbReference>
<dbReference type="FunFam" id="3.40.50.1360:FF:000002">
    <property type="entry name" value="Glucosamine-6-phosphate deaminase"/>
    <property type="match status" value="1"/>
</dbReference>
<dbReference type="Gene3D" id="3.40.50.1360">
    <property type="match status" value="1"/>
</dbReference>
<dbReference type="HAMAP" id="MF_01241">
    <property type="entry name" value="GlcN6P_deamin"/>
    <property type="match status" value="1"/>
</dbReference>
<dbReference type="InterPro" id="IPR006148">
    <property type="entry name" value="Glc/Gal-6P_isomerase"/>
</dbReference>
<dbReference type="InterPro" id="IPR004547">
    <property type="entry name" value="Glucosamine6P_isomerase"/>
</dbReference>
<dbReference type="InterPro" id="IPR018321">
    <property type="entry name" value="Glucosamine6P_isomerase_CS"/>
</dbReference>
<dbReference type="InterPro" id="IPR037171">
    <property type="entry name" value="NagB/RpiA_transferase-like"/>
</dbReference>
<dbReference type="NCBIfam" id="TIGR00502">
    <property type="entry name" value="nagB"/>
    <property type="match status" value="1"/>
</dbReference>
<dbReference type="PANTHER" id="PTHR11280">
    <property type="entry name" value="GLUCOSAMINE-6-PHOSPHATE ISOMERASE"/>
    <property type="match status" value="1"/>
</dbReference>
<dbReference type="PANTHER" id="PTHR11280:SF5">
    <property type="entry name" value="GLUCOSAMINE-6-PHOSPHATE ISOMERASE"/>
    <property type="match status" value="1"/>
</dbReference>
<dbReference type="Pfam" id="PF01182">
    <property type="entry name" value="Glucosamine_iso"/>
    <property type="match status" value="1"/>
</dbReference>
<dbReference type="SUPFAM" id="SSF100950">
    <property type="entry name" value="NagB/RpiA/CoA transferase-like"/>
    <property type="match status" value="1"/>
</dbReference>
<dbReference type="PROSITE" id="PS01161">
    <property type="entry name" value="GLC_GALNAC_ISOMERASE"/>
    <property type="match status" value="1"/>
</dbReference>
<feature type="chain" id="PRO_0000160135" description="Glucosamine-6-phosphate deaminase">
    <location>
        <begin position="1"/>
        <end position="270"/>
    </location>
</feature>
<feature type="active site" description="Proton acceptor; for enolization step" evidence="1">
    <location>
        <position position="72"/>
    </location>
</feature>
<feature type="active site" description="For ring-opening step" evidence="1">
    <location>
        <position position="141"/>
    </location>
</feature>
<feature type="active site" description="Proton acceptor; for ring-opening step" evidence="1">
    <location>
        <position position="143"/>
    </location>
</feature>
<feature type="active site" description="For ring-opening step" evidence="1">
    <location>
        <position position="148"/>
    </location>
</feature>
<feature type="site" description="Part of the allosteric site" evidence="1">
    <location>
        <position position="151"/>
    </location>
</feature>
<feature type="site" description="Part of the allosteric site" evidence="1">
    <location>
        <position position="158"/>
    </location>
</feature>
<feature type="site" description="Part of the allosteric site" evidence="1">
    <location>
        <position position="160"/>
    </location>
</feature>
<feature type="site" description="Part of the allosteric site" evidence="1">
    <location>
        <position position="161"/>
    </location>
</feature>
<feature type="site" description="Part of the allosteric site" evidence="1">
    <location>
        <position position="254"/>
    </location>
</feature>
<sequence>MRLIIQPDYQSVSQWAAHYVAAKIKAANPTPEKPFVLGCPTGSSPLGMYKALIDLNKKGIVSFQNVVTFNMDEYVGLPKEHPESYYSFMWNNFFSHIDIKKENTNILNGNAPDLDAECARYEEKIKSYGGIDLFMGGIGPDGHIAFNEPGSSLTSRTRQKTLTTDTIIANSRFFDNDINKVPKTALTVGVGTVLSAKEVMIIVNGHNKARALYHAVEGSITQMWTISALQMHEKGIIVCDDAATEELKVGTYRYFKDIEAGHLDPESLIK</sequence>
<protein>
    <recommendedName>
        <fullName>Glucosamine-6-phosphate deaminase</fullName>
        <ecNumber>3.5.99.6</ecNumber>
    </recommendedName>
    <alternativeName>
        <fullName>GlcN6P deaminase</fullName>
        <shortName>GNPDA</shortName>
    </alternativeName>
    <alternativeName>
        <fullName>Glucosamine-6-phosphate isomerase</fullName>
    </alternativeName>
</protein>
<name>NAGB_BACTN</name>
<accession>Q8A094</accession>